<evidence type="ECO:0000250" key="1"/>
<evidence type="ECO:0000305" key="2"/>
<dbReference type="EMBL" id="X94087">
    <property type="protein sequence ID" value="CAA63831.1"/>
    <property type="molecule type" value="mRNA"/>
</dbReference>
<dbReference type="PDB" id="6ZJ3">
    <property type="method" value="EM"/>
    <property type="resolution" value="3.15 A"/>
    <property type="chains" value="Lc=1-215"/>
</dbReference>
<dbReference type="PDBsum" id="6ZJ3"/>
<dbReference type="EMDB" id="EMD-11232"/>
<dbReference type="SMR" id="Q39724"/>
<dbReference type="GO" id="GO:1990904">
    <property type="term" value="C:ribonucleoprotein complex"/>
    <property type="evidence" value="ECO:0007669"/>
    <property type="project" value="UniProtKB-KW"/>
</dbReference>
<dbReference type="GO" id="GO:0005840">
    <property type="term" value="C:ribosome"/>
    <property type="evidence" value="ECO:0007669"/>
    <property type="project" value="UniProtKB-KW"/>
</dbReference>
<dbReference type="GO" id="GO:0003735">
    <property type="term" value="F:structural constituent of ribosome"/>
    <property type="evidence" value="ECO:0007669"/>
    <property type="project" value="InterPro"/>
</dbReference>
<dbReference type="GO" id="GO:0006412">
    <property type="term" value="P:translation"/>
    <property type="evidence" value="ECO:0007669"/>
    <property type="project" value="InterPro"/>
</dbReference>
<dbReference type="CDD" id="cd01433">
    <property type="entry name" value="Ribosomal_L16_L10e"/>
    <property type="match status" value="1"/>
</dbReference>
<dbReference type="FunFam" id="3.90.1170.10:FF:000002">
    <property type="entry name" value="60S ribosomal protein L10"/>
    <property type="match status" value="1"/>
</dbReference>
<dbReference type="Gene3D" id="3.90.1170.10">
    <property type="entry name" value="Ribosomal protein L10e/L16"/>
    <property type="match status" value="1"/>
</dbReference>
<dbReference type="InterPro" id="IPR047873">
    <property type="entry name" value="Ribosomal_uL16"/>
</dbReference>
<dbReference type="InterPro" id="IPR018255">
    <property type="entry name" value="Ribosomal_uL16_CS_euk_arc"/>
</dbReference>
<dbReference type="InterPro" id="IPR016180">
    <property type="entry name" value="Ribosomal_uL16_dom"/>
</dbReference>
<dbReference type="InterPro" id="IPR001197">
    <property type="entry name" value="Ribosomal_uL16_euk_arch"/>
</dbReference>
<dbReference type="InterPro" id="IPR036920">
    <property type="entry name" value="Ribosomal_uL16_sf"/>
</dbReference>
<dbReference type="NCBIfam" id="NF003239">
    <property type="entry name" value="PRK04199.1-4"/>
    <property type="match status" value="1"/>
</dbReference>
<dbReference type="NCBIfam" id="TIGR00279">
    <property type="entry name" value="uL16_euk_arch"/>
    <property type="match status" value="1"/>
</dbReference>
<dbReference type="PANTHER" id="PTHR11726">
    <property type="entry name" value="60S RIBOSOMAL PROTEIN L10"/>
    <property type="match status" value="1"/>
</dbReference>
<dbReference type="Pfam" id="PF00252">
    <property type="entry name" value="Ribosomal_L16"/>
    <property type="match status" value="1"/>
</dbReference>
<dbReference type="PIRSF" id="PIRSF005590">
    <property type="entry name" value="Ribosomal_L10"/>
    <property type="match status" value="1"/>
</dbReference>
<dbReference type="SUPFAM" id="SSF54686">
    <property type="entry name" value="Ribosomal protein L16p/L10e"/>
    <property type="match status" value="1"/>
</dbReference>
<dbReference type="PROSITE" id="PS01257">
    <property type="entry name" value="RIBOSOMAL_L10E"/>
    <property type="match status" value="1"/>
</dbReference>
<reference key="1">
    <citation type="submission" date="1995-12" db="EMBL/GenBank/DDBJ databases">
        <authorList>
            <person name="Deruere J."/>
            <person name="Schantz M.L."/>
            <person name="Schantz R."/>
        </authorList>
    </citation>
    <scope>NUCLEOTIDE SEQUENCE [MRNA]</scope>
    <source>
        <strain>Z / UTEX 753</strain>
    </source>
</reference>
<feature type="chain" id="PRO_0000147116" description="Large ribosomal subunit protein uL16">
    <location>
        <begin position="1"/>
        <end position="215"/>
    </location>
</feature>
<name>RL10_EUGGR</name>
<sequence length="215" mass="24642">MGRRPAKCYRYCKNKAYPKSRYCRGVPEAKIRIYDCGMRKLNADTFPLTYHLISMEREQIGSEALEAARINANKYMIKNAGKEAYHIRVRVHPFHVCRINKMLSCAGADRLQQGMRGAFGKPNGLAARVRIGQPLMSIRVKPQHEAVVVAALKRASYKFAGRQVIAKSTMWGFTEIRSENYVKWKEEGKFRVDGVSTKILRNRGRLHRAKRVRAA</sequence>
<organism>
    <name type="scientific">Euglena gracilis</name>
    <dbReference type="NCBI Taxonomy" id="3039"/>
    <lineage>
        <taxon>Eukaryota</taxon>
        <taxon>Discoba</taxon>
        <taxon>Euglenozoa</taxon>
        <taxon>Euglenida</taxon>
        <taxon>Spirocuta</taxon>
        <taxon>Euglenophyceae</taxon>
        <taxon>Euglenales</taxon>
        <taxon>Euglenaceae</taxon>
        <taxon>Euglena</taxon>
    </lineage>
</organism>
<comment type="subunit">
    <text evidence="1">Component of the small ribosomal subunit. Mature ribosomes consist of a small (40S) and a large (60S) subunit. The 40S subunit contains about 33 different proteins and 1 molecule of RNA (18S). The 60S subunit contains about 49 different proteins and 3 molecules of RNA (25S, 5.8S and 5S) (By similarity).</text>
</comment>
<comment type="similarity">
    <text evidence="2">Belongs to the universal ribosomal protein uL16 family.</text>
</comment>
<keyword id="KW-0002">3D-structure</keyword>
<keyword id="KW-0687">Ribonucleoprotein</keyword>
<keyword id="KW-0689">Ribosomal protein</keyword>
<protein>
    <recommendedName>
        <fullName evidence="2">Large ribosomal subunit protein uL16</fullName>
    </recommendedName>
    <alternativeName>
        <fullName>60S ribosomal protein L10</fullName>
    </alternativeName>
</protein>
<proteinExistence type="evidence at protein level"/>
<gene>
    <name type="primary">RPL10</name>
</gene>
<accession>Q39724</accession>